<feature type="chain" id="PRO_0000109479" description="tRNA-splicing endonuclease">
    <location>
        <begin position="1"/>
        <end position="168"/>
    </location>
</feature>
<feature type="active site" evidence="1">
    <location>
        <position position="107"/>
    </location>
</feature>
<feature type="active site" evidence="1">
    <location>
        <position position="114"/>
    </location>
</feature>
<feature type="active site" evidence="1">
    <location>
        <position position="145"/>
    </location>
</feature>
<sequence>MIIFYLSGDRVFSTDQNAINGLYNKRYFGKVVEGKLFLSLLEAAYLVERGKIEVRDGKRKLSLEEIMNLGRARDELFDAKYLVYKDLRDRGYTVKSGLKFGSHFRVYRRGMEEHSEWLVWVVPENSRLSPNDITARVRVAHGVRKNMIMAIVDEDADVTYYKVEWVKF</sequence>
<comment type="function">
    <text evidence="1">Endonuclease that removes tRNA introns. Cleaves pre-tRNA at the 5'- and 3'-splice sites to release the intron. The products are an intron and two tRNA half-molecules bearing 2',3' cyclic phosphate and 5'-OH termini. Recognizes a pseudosymmetric substrate in which 2 bulged loops of 3 bases are separated by a stem of 4 bp.</text>
</comment>
<comment type="catalytic activity">
    <reaction evidence="1">
        <text>pretRNA = a 3'-half-tRNA molecule with a 5'-OH end + a 5'-half-tRNA molecule with a 2',3'-cyclic phosphate end + an intron with a 2',3'-cyclic phosphate and a 5'-hydroxyl terminus.</text>
        <dbReference type="EC" id="4.6.1.16"/>
    </reaction>
</comment>
<comment type="subunit">
    <text evidence="1">Homotetramer; although the tetramer contains four active sites, only two participate in the cleavage. Therefore, it should be considered as a dimer of dimers.</text>
</comment>
<comment type="similarity">
    <text evidence="1">Belongs to the tRNA-intron endonuclease family. Archaeal short subfamily.</text>
</comment>
<protein>
    <recommendedName>
        <fullName evidence="1">tRNA-splicing endonuclease</fullName>
        <ecNumber evidence="1">4.6.1.16</ecNumber>
    </recommendedName>
    <alternativeName>
        <fullName evidence="1">tRNA-intron endonuclease</fullName>
    </alternativeName>
</protein>
<organism>
    <name type="scientific">Thermococcus kodakarensis (strain ATCC BAA-918 / JCM 12380 / KOD1)</name>
    <name type="common">Pyrococcus kodakaraensis (strain KOD1)</name>
    <dbReference type="NCBI Taxonomy" id="69014"/>
    <lineage>
        <taxon>Archaea</taxon>
        <taxon>Methanobacteriati</taxon>
        <taxon>Methanobacteriota</taxon>
        <taxon>Thermococci</taxon>
        <taxon>Thermococcales</taxon>
        <taxon>Thermococcaceae</taxon>
        <taxon>Thermococcus</taxon>
    </lineage>
</organism>
<accession>Q5JHP5</accession>
<dbReference type="EC" id="4.6.1.16" evidence="1"/>
<dbReference type="EMBL" id="AP006878">
    <property type="protein sequence ID" value="BAD86404.1"/>
    <property type="molecule type" value="Genomic_DNA"/>
</dbReference>
<dbReference type="RefSeq" id="WP_011251165.1">
    <property type="nucleotide sequence ID" value="NC_006624.1"/>
</dbReference>
<dbReference type="SMR" id="Q5JHP5"/>
<dbReference type="STRING" id="69014.TK2215"/>
<dbReference type="EnsemblBacteria" id="BAD86404">
    <property type="protein sequence ID" value="BAD86404"/>
    <property type="gene ID" value="TK2215"/>
</dbReference>
<dbReference type="GeneID" id="78448755"/>
<dbReference type="KEGG" id="tko:TK2215"/>
<dbReference type="PATRIC" id="fig|69014.16.peg.2171"/>
<dbReference type="eggNOG" id="arCOG01701">
    <property type="taxonomic scope" value="Archaea"/>
</dbReference>
<dbReference type="HOGENOM" id="CLU_114393_0_0_2"/>
<dbReference type="InParanoid" id="Q5JHP5"/>
<dbReference type="OrthoDB" id="46045at2157"/>
<dbReference type="PhylomeDB" id="Q5JHP5"/>
<dbReference type="Proteomes" id="UP000000536">
    <property type="component" value="Chromosome"/>
</dbReference>
<dbReference type="GO" id="GO:0005737">
    <property type="term" value="C:cytoplasm"/>
    <property type="evidence" value="ECO:0000318"/>
    <property type="project" value="GO_Central"/>
</dbReference>
<dbReference type="GO" id="GO:0004519">
    <property type="term" value="F:endonuclease activity"/>
    <property type="evidence" value="ECO:0000318"/>
    <property type="project" value="GO_Central"/>
</dbReference>
<dbReference type="GO" id="GO:0016829">
    <property type="term" value="F:lyase activity"/>
    <property type="evidence" value="ECO:0007669"/>
    <property type="project" value="UniProtKB-KW"/>
</dbReference>
<dbReference type="GO" id="GO:0003676">
    <property type="term" value="F:nucleic acid binding"/>
    <property type="evidence" value="ECO:0007669"/>
    <property type="project" value="InterPro"/>
</dbReference>
<dbReference type="GO" id="GO:0000213">
    <property type="term" value="F:tRNA-intron endonuclease activity"/>
    <property type="evidence" value="ECO:0007669"/>
    <property type="project" value="UniProtKB-UniRule"/>
</dbReference>
<dbReference type="GO" id="GO:0008033">
    <property type="term" value="P:tRNA processing"/>
    <property type="evidence" value="ECO:0000318"/>
    <property type="project" value="GO_Central"/>
</dbReference>
<dbReference type="GO" id="GO:0006388">
    <property type="term" value="P:tRNA splicing, via endonucleolytic cleavage and ligation"/>
    <property type="evidence" value="ECO:0007669"/>
    <property type="project" value="UniProtKB-UniRule"/>
</dbReference>
<dbReference type="CDD" id="cd22363">
    <property type="entry name" value="tRNA-intron_lyase_C"/>
    <property type="match status" value="1"/>
</dbReference>
<dbReference type="FunFam" id="3.40.1350.10:FF:000006">
    <property type="entry name" value="tRNA-splicing endonuclease"/>
    <property type="match status" value="1"/>
</dbReference>
<dbReference type="Gene3D" id="3.40.1350.10">
    <property type="match status" value="1"/>
</dbReference>
<dbReference type="Gene3D" id="3.40.1170.20">
    <property type="entry name" value="tRNA intron endonuclease, N-terminal domain"/>
    <property type="match status" value="1"/>
</dbReference>
<dbReference type="HAMAP" id="MF_01833">
    <property type="entry name" value="EndA_short"/>
    <property type="match status" value="1"/>
</dbReference>
<dbReference type="InterPro" id="IPR011856">
    <property type="entry name" value="tRNA_endonuc-like_dom_sf"/>
</dbReference>
<dbReference type="InterPro" id="IPR036167">
    <property type="entry name" value="tRNA_intron_Endo_cat-like_sf"/>
</dbReference>
<dbReference type="InterPro" id="IPR006677">
    <property type="entry name" value="tRNA_intron_Endonuc_cat-like"/>
</dbReference>
<dbReference type="InterPro" id="IPR006678">
    <property type="entry name" value="tRNA_intron_Endonuc_N"/>
</dbReference>
<dbReference type="InterPro" id="IPR036740">
    <property type="entry name" value="tRNA_intron_Endonuc_N_sf"/>
</dbReference>
<dbReference type="InterPro" id="IPR006676">
    <property type="entry name" value="tRNA_splic"/>
</dbReference>
<dbReference type="InterPro" id="IPR016442">
    <property type="entry name" value="tRNA_splic_arch_short"/>
</dbReference>
<dbReference type="NCBIfam" id="TIGR00324">
    <property type="entry name" value="endA"/>
    <property type="match status" value="1"/>
</dbReference>
<dbReference type="PANTHER" id="PTHR21227">
    <property type="entry name" value="TRNA-SPLICING ENDONUCLEASE SUBUNIT SEN2"/>
    <property type="match status" value="1"/>
</dbReference>
<dbReference type="PANTHER" id="PTHR21227:SF0">
    <property type="entry name" value="TRNA-SPLICING ENDONUCLEASE SUBUNIT SEN2"/>
    <property type="match status" value="1"/>
</dbReference>
<dbReference type="Pfam" id="PF01974">
    <property type="entry name" value="tRNA_int_endo"/>
    <property type="match status" value="1"/>
</dbReference>
<dbReference type="Pfam" id="PF02778">
    <property type="entry name" value="tRNA_int_endo_N"/>
    <property type="match status" value="1"/>
</dbReference>
<dbReference type="PIRSF" id="PIRSF005285">
    <property type="entry name" value="tRNA_splic_archaea"/>
    <property type="match status" value="1"/>
</dbReference>
<dbReference type="SUPFAM" id="SSF53032">
    <property type="entry name" value="tRNA-intron endonuclease catalytic domain-like"/>
    <property type="match status" value="1"/>
</dbReference>
<dbReference type="SUPFAM" id="SSF55267">
    <property type="entry name" value="tRNA-intron endonuclease N-terminal domain-like"/>
    <property type="match status" value="1"/>
</dbReference>
<evidence type="ECO:0000255" key="1">
    <source>
        <dbReference type="HAMAP-Rule" id="MF_01833"/>
    </source>
</evidence>
<gene>
    <name evidence="1" type="primary">endA</name>
    <name type="ordered locus">TK2215</name>
</gene>
<proteinExistence type="inferred from homology"/>
<keyword id="KW-0456">Lyase</keyword>
<keyword id="KW-1185">Reference proteome</keyword>
<keyword id="KW-0819">tRNA processing</keyword>
<name>ENDA_THEKO</name>
<reference key="1">
    <citation type="journal article" date="2005" name="Genome Res.">
        <title>Complete genome sequence of the hyperthermophilic archaeon Thermococcus kodakaraensis KOD1 and comparison with Pyrococcus genomes.</title>
        <authorList>
            <person name="Fukui T."/>
            <person name="Atomi H."/>
            <person name="Kanai T."/>
            <person name="Matsumi R."/>
            <person name="Fujiwara S."/>
            <person name="Imanaka T."/>
        </authorList>
    </citation>
    <scope>NUCLEOTIDE SEQUENCE [LARGE SCALE GENOMIC DNA]</scope>
    <source>
        <strain>ATCC BAA-918 / JCM 12380 / KOD1</strain>
    </source>
</reference>